<feature type="chain" id="PRO_0000219019" description="Rho GDP-dissociation inhibitor 3">
    <location>
        <begin position="1"/>
        <end position="225"/>
    </location>
</feature>
<keyword id="KW-0963">Cytoplasm</keyword>
<keyword id="KW-0343">GTPase activation</keyword>
<keyword id="KW-1185">Reference proteome</keyword>
<reference key="1">
    <citation type="journal article" date="1996" name="J. Biol. Chem.">
        <title>RhoGDI-3 is a new GDP dissociation inhibitor (GDI). Identification of a non-cytosolic GDI protein interacting with the small GTP-binding proteins RhoB and RhoG.</title>
        <authorList>
            <person name="Zalcman G."/>
            <person name="Closson V."/>
            <person name="Camonis J."/>
            <person name="Honore N."/>
            <person name="Rousseau-Merck M.-F."/>
            <person name="Tavitian A."/>
            <person name="Olofsson B."/>
        </authorList>
    </citation>
    <scope>NUCLEOTIDE SEQUENCE [MRNA]</scope>
    <source>
        <strain>BALB/cJ</strain>
        <tissue>Brain</tissue>
    </source>
</reference>
<reference key="2">
    <citation type="submission" date="1996-12" db="EMBL/GenBank/DDBJ databases">
        <authorList>
            <person name="Gebbink M.F.B.G."/>
            <person name="Poland M."/>
            <person name="Kranenburg O."/>
            <person name="Vanhorck F.P.G."/>
            <person name="Moolenaar W.H."/>
        </authorList>
    </citation>
    <scope>NUCLEOTIDE SEQUENCE [MRNA]</scope>
    <source>
        <tissue>Brain</tissue>
    </source>
</reference>
<reference key="3">
    <citation type="journal article" date="2004" name="Genome Res.">
        <title>The status, quality, and expansion of the NIH full-length cDNA project: the Mammalian Gene Collection (MGC).</title>
        <authorList>
            <consortium name="The MGC Project Team"/>
        </authorList>
    </citation>
    <scope>NUCLEOTIDE SEQUENCE [LARGE SCALE MRNA]</scope>
    <source>
        <strain>C57BL/6J</strain>
        <tissue>Mammary gland</tissue>
    </source>
</reference>
<evidence type="ECO:0000305" key="1"/>
<comment type="function">
    <text>Inhibits GDP/GTP exchange reaction of RhoB. Interacts specifically with the GDP- and GTP-bound forms of post-translationally processed Rhob and Rhog proteins, both of which show a growth-regulated expression in mammalian cells. Stimulates the release of the GDP-bound but not the GTP-bound RhoB protein. Also inhibits the GDP/GTP exchange of RhoB but shows less ability to inhibit the dissociation of prebound GTP.</text>
</comment>
<comment type="subcellular location">
    <subcellularLocation>
        <location evidence="1">Cytoplasm</location>
    </subcellularLocation>
</comment>
<comment type="tissue specificity">
    <text>Detected only in brain, lung, kidney and testis.</text>
</comment>
<comment type="similarity">
    <text evidence="1">Belongs to the Rho GDI family.</text>
</comment>
<sequence length="225" mass="25296">MLGLDACELGEQLLELLRLALCARVLLADKDGESTPSDEVLDEIVPEYQAPGKKSMLAIWQLDPGDVSLVKYKQALLGPLPPIMDPSLPNVQVTRLTLLTEQAPGPIIMDLTGDLDALKNQVFVLKEGIEYKVKITFKVNKEIVSGLKCLHHTYRRGLRVDKAIFMVGSYGPRAQEYEFVTSVEEAPRGALARGLYVVRSLFTDDDRLNHLSWEWHLHVCQDWKD</sequence>
<dbReference type="EMBL" id="L42463">
    <property type="protein sequence ID" value="AAC37704.1"/>
    <property type="molecule type" value="mRNA"/>
</dbReference>
<dbReference type="EMBL" id="U73198">
    <property type="protein sequence ID" value="AAB18196.1"/>
    <property type="molecule type" value="mRNA"/>
</dbReference>
<dbReference type="EMBL" id="BC002032">
    <property type="protein sequence ID" value="AAH02032.1"/>
    <property type="molecule type" value="mRNA"/>
</dbReference>
<dbReference type="CCDS" id="CCDS28548.1"/>
<dbReference type="RefSeq" id="NP_032139.1">
    <property type="nucleotide sequence ID" value="NM_008113.3"/>
</dbReference>
<dbReference type="SMR" id="Q62160"/>
<dbReference type="FunCoup" id="Q62160">
    <property type="interactions" value="467"/>
</dbReference>
<dbReference type="STRING" id="10090.ENSMUSP00000025019"/>
<dbReference type="iPTMnet" id="Q62160"/>
<dbReference type="PhosphoSitePlus" id="Q62160"/>
<dbReference type="PaxDb" id="10090-ENSMUSP00000025019"/>
<dbReference type="ProteomicsDB" id="267791"/>
<dbReference type="Antibodypedia" id="34941">
    <property type="antibodies" value="166 antibodies from 34 providers"/>
</dbReference>
<dbReference type="DNASU" id="14570"/>
<dbReference type="Ensembl" id="ENSMUST00000025019.9">
    <property type="protein sequence ID" value="ENSMUSP00000025019.3"/>
    <property type="gene ID" value="ENSMUSG00000073433.12"/>
</dbReference>
<dbReference type="GeneID" id="14570"/>
<dbReference type="KEGG" id="mmu:14570"/>
<dbReference type="UCSC" id="uc008bdp.1">
    <property type="organism name" value="mouse"/>
</dbReference>
<dbReference type="AGR" id="MGI:108430"/>
<dbReference type="CTD" id="398"/>
<dbReference type="MGI" id="MGI:108430">
    <property type="gene designation" value="Arhgdig"/>
</dbReference>
<dbReference type="VEuPathDB" id="HostDB:ENSMUSG00000073433"/>
<dbReference type="eggNOG" id="KOG3205">
    <property type="taxonomic scope" value="Eukaryota"/>
</dbReference>
<dbReference type="GeneTree" id="ENSGT00390000006233"/>
<dbReference type="HOGENOM" id="CLU_076228_1_1_1"/>
<dbReference type="InParanoid" id="Q62160"/>
<dbReference type="OMA" id="HICQDWE"/>
<dbReference type="OrthoDB" id="1683373at2759"/>
<dbReference type="PhylomeDB" id="Q62160"/>
<dbReference type="TreeFam" id="TF105387"/>
<dbReference type="Reactome" id="R-MMU-9013026">
    <property type="pathway name" value="RHOB GTPase cycle"/>
</dbReference>
<dbReference type="Reactome" id="R-MMU-9013148">
    <property type="pathway name" value="CDC42 GTPase cycle"/>
</dbReference>
<dbReference type="Reactome" id="R-MMU-9013407">
    <property type="pathway name" value="RHOH GTPase cycle"/>
</dbReference>
<dbReference type="Reactome" id="R-MMU-9013408">
    <property type="pathway name" value="RHOG GTPase cycle"/>
</dbReference>
<dbReference type="BioGRID-ORCS" id="14570">
    <property type="hits" value="2 hits in 79 CRISPR screens"/>
</dbReference>
<dbReference type="ChiTaRS" id="Arhgdig">
    <property type="organism name" value="mouse"/>
</dbReference>
<dbReference type="PRO" id="PR:Q62160"/>
<dbReference type="Proteomes" id="UP000000589">
    <property type="component" value="Chromosome 17"/>
</dbReference>
<dbReference type="RNAct" id="Q62160">
    <property type="molecule type" value="protein"/>
</dbReference>
<dbReference type="Bgee" id="ENSMUSG00000073433">
    <property type="expression patterns" value="Expressed in nasal cavity epithelium and 104 other cell types or tissues"/>
</dbReference>
<dbReference type="ExpressionAtlas" id="Q62160">
    <property type="expression patterns" value="baseline and differential"/>
</dbReference>
<dbReference type="GO" id="GO:0005829">
    <property type="term" value="C:cytosol"/>
    <property type="evidence" value="ECO:0007669"/>
    <property type="project" value="Ensembl"/>
</dbReference>
<dbReference type="GO" id="GO:0016020">
    <property type="term" value="C:membrane"/>
    <property type="evidence" value="ECO:0000314"/>
    <property type="project" value="MGI"/>
</dbReference>
<dbReference type="GO" id="GO:0005886">
    <property type="term" value="C:plasma membrane"/>
    <property type="evidence" value="ECO:0007669"/>
    <property type="project" value="Ensembl"/>
</dbReference>
<dbReference type="GO" id="GO:0005092">
    <property type="term" value="F:GDP-dissociation inhibitor activity"/>
    <property type="evidence" value="ECO:0000314"/>
    <property type="project" value="MGI"/>
</dbReference>
<dbReference type="GO" id="GO:0005096">
    <property type="term" value="F:GTPase activator activity"/>
    <property type="evidence" value="ECO:0007669"/>
    <property type="project" value="UniProtKB-KW"/>
</dbReference>
<dbReference type="GO" id="GO:0030695">
    <property type="term" value="F:GTPase regulator activity"/>
    <property type="evidence" value="ECO:0000314"/>
    <property type="project" value="MGI"/>
</dbReference>
<dbReference type="GO" id="GO:0005094">
    <property type="term" value="F:Rho GDP-dissociation inhibitor activity"/>
    <property type="evidence" value="ECO:0007669"/>
    <property type="project" value="InterPro"/>
</dbReference>
<dbReference type="GO" id="GO:0001835">
    <property type="term" value="P:blastocyst hatching"/>
    <property type="evidence" value="ECO:0000315"/>
    <property type="project" value="MGI"/>
</dbReference>
<dbReference type="GO" id="GO:0032880">
    <property type="term" value="P:regulation of protein localization"/>
    <property type="evidence" value="ECO:0000314"/>
    <property type="project" value="MGI"/>
</dbReference>
<dbReference type="GO" id="GO:0007266">
    <property type="term" value="P:Rho protein signal transduction"/>
    <property type="evidence" value="ECO:0007669"/>
    <property type="project" value="InterPro"/>
</dbReference>
<dbReference type="FunFam" id="2.70.50.30:FF:000001">
    <property type="entry name" value="Rho GDP-dissociation inhibitor 1"/>
    <property type="match status" value="1"/>
</dbReference>
<dbReference type="Gene3D" id="2.70.50.30">
    <property type="entry name" value="Coagulation Factor XIII, subunit A, domain 1"/>
    <property type="match status" value="1"/>
</dbReference>
<dbReference type="InterPro" id="IPR014756">
    <property type="entry name" value="Ig_E-set"/>
</dbReference>
<dbReference type="InterPro" id="IPR000406">
    <property type="entry name" value="Rho_GDI"/>
</dbReference>
<dbReference type="InterPro" id="IPR024792">
    <property type="entry name" value="RhoGDI_dom_sf"/>
</dbReference>
<dbReference type="PANTHER" id="PTHR10980">
    <property type="entry name" value="RHO GDP-DISSOCIATION INHIBITOR"/>
    <property type="match status" value="1"/>
</dbReference>
<dbReference type="PANTHER" id="PTHR10980:SF8">
    <property type="entry name" value="RHO GDP-DISSOCIATION INHIBITOR 3"/>
    <property type="match status" value="1"/>
</dbReference>
<dbReference type="Pfam" id="PF02115">
    <property type="entry name" value="Rho_GDI"/>
    <property type="match status" value="1"/>
</dbReference>
<dbReference type="PRINTS" id="PR00492">
    <property type="entry name" value="RHOGDI"/>
</dbReference>
<dbReference type="SUPFAM" id="SSF81296">
    <property type="entry name" value="E set domains"/>
    <property type="match status" value="1"/>
</dbReference>
<gene>
    <name type="primary">Arhgdig</name>
    <name type="synonym">Gdi5</name>
</gene>
<accession>Q62160</accession>
<protein>
    <recommendedName>
        <fullName>Rho GDP-dissociation inhibitor 3</fullName>
        <shortName>Rho GDI 3</shortName>
    </recommendedName>
    <alternativeName>
        <fullName>Rho-GDI gamma</fullName>
    </alternativeName>
    <alternativeName>
        <fullName>Rho-GDI2</fullName>
    </alternativeName>
</protein>
<name>GDIR3_MOUSE</name>
<organism>
    <name type="scientific">Mus musculus</name>
    <name type="common">Mouse</name>
    <dbReference type="NCBI Taxonomy" id="10090"/>
    <lineage>
        <taxon>Eukaryota</taxon>
        <taxon>Metazoa</taxon>
        <taxon>Chordata</taxon>
        <taxon>Craniata</taxon>
        <taxon>Vertebrata</taxon>
        <taxon>Euteleostomi</taxon>
        <taxon>Mammalia</taxon>
        <taxon>Eutheria</taxon>
        <taxon>Euarchontoglires</taxon>
        <taxon>Glires</taxon>
        <taxon>Rodentia</taxon>
        <taxon>Myomorpha</taxon>
        <taxon>Muroidea</taxon>
        <taxon>Muridae</taxon>
        <taxon>Murinae</taxon>
        <taxon>Mus</taxon>
        <taxon>Mus</taxon>
    </lineage>
</organism>
<proteinExistence type="evidence at transcript level"/>